<feature type="chain" id="PRO_0000386492" description="Diacylglycerol kinase">
    <location>
        <begin position="1"/>
        <end position="315"/>
    </location>
</feature>
<feature type="domain" description="DAGKc" evidence="2">
    <location>
        <begin position="1"/>
        <end position="132"/>
    </location>
</feature>
<feature type="active site" description="Proton acceptor" evidence="1">
    <location>
        <position position="273"/>
    </location>
</feature>
<feature type="binding site" evidence="2">
    <location>
        <begin position="10"/>
        <end position="14"/>
    </location>
    <ligand>
        <name>ATP</name>
        <dbReference type="ChEBI" id="CHEBI:30616"/>
    </ligand>
</feature>
<feature type="binding site" evidence="2">
    <location>
        <position position="41"/>
    </location>
    <ligand>
        <name>ATP</name>
        <dbReference type="ChEBI" id="CHEBI:30616"/>
    </ligand>
</feature>
<feature type="binding site" evidence="2">
    <location>
        <begin position="67"/>
        <end position="73"/>
    </location>
    <ligand>
        <name>ATP</name>
        <dbReference type="ChEBI" id="CHEBI:30616"/>
    </ligand>
</feature>
<feature type="binding site" evidence="2">
    <location>
        <position position="94"/>
    </location>
    <ligand>
        <name>ATP</name>
        <dbReference type="ChEBI" id="CHEBI:30616"/>
    </ligand>
</feature>
<feature type="binding site" evidence="1">
    <location>
        <position position="213"/>
    </location>
    <ligand>
        <name>Mg(2+)</name>
        <dbReference type="ChEBI" id="CHEBI:18420"/>
    </ligand>
</feature>
<feature type="binding site" evidence="1">
    <location>
        <position position="216"/>
    </location>
    <ligand>
        <name>Mg(2+)</name>
        <dbReference type="ChEBI" id="CHEBI:18420"/>
    </ligand>
</feature>
<feature type="binding site" evidence="1">
    <location>
        <position position="218"/>
    </location>
    <ligand>
        <name>Mg(2+)</name>
        <dbReference type="ChEBI" id="CHEBI:18420"/>
    </ligand>
</feature>
<dbReference type="EC" id="2.7.1.107" evidence="1"/>
<dbReference type="EMBL" id="AP009351">
    <property type="protein sequence ID" value="BAF68108.1"/>
    <property type="molecule type" value="Genomic_DNA"/>
</dbReference>
<dbReference type="RefSeq" id="WP_001231451.1">
    <property type="nucleotide sequence ID" value="NZ_JBBIAE010000010.1"/>
</dbReference>
<dbReference type="SMR" id="A6QIC6"/>
<dbReference type="KEGG" id="sae:NWMN_1836"/>
<dbReference type="HOGENOM" id="CLU_045532_1_0_9"/>
<dbReference type="Proteomes" id="UP000006386">
    <property type="component" value="Chromosome"/>
</dbReference>
<dbReference type="GO" id="GO:0005886">
    <property type="term" value="C:plasma membrane"/>
    <property type="evidence" value="ECO:0007669"/>
    <property type="project" value="TreeGrafter"/>
</dbReference>
<dbReference type="GO" id="GO:0005524">
    <property type="term" value="F:ATP binding"/>
    <property type="evidence" value="ECO:0007669"/>
    <property type="project" value="UniProtKB-KW"/>
</dbReference>
<dbReference type="GO" id="GO:0004143">
    <property type="term" value="F:ATP-dependent diacylglycerol kinase activity"/>
    <property type="evidence" value="ECO:0007669"/>
    <property type="project" value="UniProtKB-EC"/>
</dbReference>
<dbReference type="GO" id="GO:0046872">
    <property type="term" value="F:metal ion binding"/>
    <property type="evidence" value="ECO:0007669"/>
    <property type="project" value="UniProtKB-KW"/>
</dbReference>
<dbReference type="GO" id="GO:0008654">
    <property type="term" value="P:phospholipid biosynthetic process"/>
    <property type="evidence" value="ECO:0007669"/>
    <property type="project" value="UniProtKB-KW"/>
</dbReference>
<dbReference type="FunFam" id="2.60.200.40:FF:000015">
    <property type="entry name" value="Diacylglycerol kinase"/>
    <property type="match status" value="1"/>
</dbReference>
<dbReference type="FunFam" id="3.40.50.10330:FF:000008">
    <property type="entry name" value="Probable lipid kinase YegS"/>
    <property type="match status" value="1"/>
</dbReference>
<dbReference type="Gene3D" id="2.60.200.40">
    <property type="match status" value="1"/>
</dbReference>
<dbReference type="Gene3D" id="3.40.50.10330">
    <property type="entry name" value="Probable inorganic polyphosphate/atp-NAD kinase, domain 1"/>
    <property type="match status" value="1"/>
</dbReference>
<dbReference type="InterPro" id="IPR017438">
    <property type="entry name" value="ATP-NAD_kinase_N"/>
</dbReference>
<dbReference type="InterPro" id="IPR005218">
    <property type="entry name" value="Diacylglycerol/lipid_kinase"/>
</dbReference>
<dbReference type="InterPro" id="IPR001206">
    <property type="entry name" value="Diacylglycerol_kinase_cat_dom"/>
</dbReference>
<dbReference type="InterPro" id="IPR050187">
    <property type="entry name" value="Lipid_Phosphate_FormReg"/>
</dbReference>
<dbReference type="InterPro" id="IPR016064">
    <property type="entry name" value="NAD/diacylglycerol_kinase_sf"/>
</dbReference>
<dbReference type="InterPro" id="IPR045540">
    <property type="entry name" value="YegS/DAGK_C"/>
</dbReference>
<dbReference type="NCBIfam" id="NF009603">
    <property type="entry name" value="PRK13055.1"/>
    <property type="match status" value="1"/>
</dbReference>
<dbReference type="NCBIfam" id="NF009874">
    <property type="entry name" value="PRK13337.1"/>
    <property type="match status" value="1"/>
</dbReference>
<dbReference type="NCBIfam" id="TIGR00147">
    <property type="entry name" value="YegS/Rv2252/BmrU family lipid kinase"/>
    <property type="match status" value="1"/>
</dbReference>
<dbReference type="PANTHER" id="PTHR12358:SF106">
    <property type="entry name" value="LIPID KINASE YEGS"/>
    <property type="match status" value="1"/>
</dbReference>
<dbReference type="PANTHER" id="PTHR12358">
    <property type="entry name" value="SPHINGOSINE KINASE"/>
    <property type="match status" value="1"/>
</dbReference>
<dbReference type="Pfam" id="PF00781">
    <property type="entry name" value="DAGK_cat"/>
    <property type="match status" value="1"/>
</dbReference>
<dbReference type="Pfam" id="PF19279">
    <property type="entry name" value="YegS_C"/>
    <property type="match status" value="1"/>
</dbReference>
<dbReference type="SMART" id="SM00046">
    <property type="entry name" value="DAGKc"/>
    <property type="match status" value="1"/>
</dbReference>
<dbReference type="SUPFAM" id="SSF111331">
    <property type="entry name" value="NAD kinase/diacylglycerol kinase-like"/>
    <property type="match status" value="1"/>
</dbReference>
<dbReference type="PROSITE" id="PS50146">
    <property type="entry name" value="DAGK"/>
    <property type="match status" value="1"/>
</dbReference>
<organism>
    <name type="scientific">Staphylococcus aureus (strain Newman)</name>
    <dbReference type="NCBI Taxonomy" id="426430"/>
    <lineage>
        <taxon>Bacteria</taxon>
        <taxon>Bacillati</taxon>
        <taxon>Bacillota</taxon>
        <taxon>Bacilli</taxon>
        <taxon>Bacillales</taxon>
        <taxon>Staphylococcaceae</taxon>
        <taxon>Staphylococcus</taxon>
    </lineage>
</organism>
<keyword id="KW-0067">ATP-binding</keyword>
<keyword id="KW-0418">Kinase</keyword>
<keyword id="KW-0444">Lipid biosynthesis</keyword>
<keyword id="KW-0443">Lipid metabolism</keyword>
<keyword id="KW-0460">Magnesium</keyword>
<keyword id="KW-0479">Metal-binding</keyword>
<keyword id="KW-0547">Nucleotide-binding</keyword>
<keyword id="KW-0594">Phospholipid biosynthesis</keyword>
<keyword id="KW-1208">Phospholipid metabolism</keyword>
<keyword id="KW-0808">Transferase</keyword>
<evidence type="ECO:0000250" key="1">
    <source>
        <dbReference type="UniProtKB" id="Q6GFF9"/>
    </source>
</evidence>
<evidence type="ECO:0000255" key="2">
    <source>
        <dbReference type="PROSITE-ProRule" id="PRU00783"/>
    </source>
</evidence>
<evidence type="ECO:0000305" key="3"/>
<reference key="1">
    <citation type="journal article" date="2008" name="J. Bacteriol.">
        <title>Genome sequence of Staphylococcus aureus strain Newman and comparative analysis of staphylococcal genomes: polymorphism and evolution of two major pathogenicity islands.</title>
        <authorList>
            <person name="Baba T."/>
            <person name="Bae T."/>
            <person name="Schneewind O."/>
            <person name="Takeuchi F."/>
            <person name="Hiramatsu K."/>
        </authorList>
    </citation>
    <scope>NUCLEOTIDE SEQUENCE [LARGE SCALE GENOMIC DNA]</scope>
    <source>
        <strain>Newman</strain>
    </source>
</reference>
<gene>
    <name type="primary">dagK</name>
    <name type="ordered locus">NWMN_1836</name>
</gene>
<proteinExistence type="inferred from homology"/>
<protein>
    <recommendedName>
        <fullName>Diacylglycerol kinase</fullName>
        <shortName>DAG kinase</shortName>
        <shortName>DAGK</shortName>
        <ecNumber evidence="1">2.7.1.107</ecNumber>
    </recommendedName>
</protein>
<sequence>MRKRARIIYNPTSGKELFKRELPDALIKLEKAGYETSAYATEKIGDATLEAERAMHENYDVLIAAGGDGTLNEVVNGIAEKPNRPKLGVIPMGTVNDFGRALHIPNDIMGALDVIIEGHSTKVDIGKMNNRYFINLAAGGQLTQVSYETPSKLKSIVGPFAYYIKGFEMLPQMKAVDLRIEYDGNVFQGEALLFFLGLTNSMAGFEKLVPDAKLDDGYFTLIIVEKSNLAELGHIMTLASRGEHTKHPKVIYEKAKAINISSFTDLQLNVDGEYGGKLPANFLNLERHIDVFAPNDIVNEELINNDHVDDNLIEE</sequence>
<comment type="function">
    <text evidence="1">Catalyzes the phosphorylation of diacylglycerol (DAG) into phosphatidic acid. Is a key enzyme involved in the production of lipoteichoic acid by reintroducing DAG formed from the breakdown of membrane phospholipids into the phosphatidylglycerol biosynthetic pathway.</text>
</comment>
<comment type="catalytic activity">
    <reaction evidence="1">
        <text>a 1,2-diacyl-sn-glycerol + ATP = a 1,2-diacyl-sn-glycero-3-phosphate + ADP + H(+)</text>
        <dbReference type="Rhea" id="RHEA:10272"/>
        <dbReference type="ChEBI" id="CHEBI:15378"/>
        <dbReference type="ChEBI" id="CHEBI:17815"/>
        <dbReference type="ChEBI" id="CHEBI:30616"/>
        <dbReference type="ChEBI" id="CHEBI:58608"/>
        <dbReference type="ChEBI" id="CHEBI:456216"/>
        <dbReference type="EC" id="2.7.1.107"/>
    </reaction>
</comment>
<comment type="cofactor">
    <cofactor evidence="1">
        <name>Mg(2+)</name>
        <dbReference type="ChEBI" id="CHEBI:18420"/>
    </cofactor>
    <text evidence="1">Binds 1 Mg(2+) ion per subunit. This ion appears to have a structural role and is required for catalytic activity.</text>
</comment>
<comment type="subunit">
    <text evidence="1">Homodimer.</text>
</comment>
<comment type="similarity">
    <text evidence="3">Belongs to the diacylglycerol/lipid kinase family.</text>
</comment>
<name>DAGK_STAAE</name>
<accession>A6QIC6</accession>